<evidence type="ECO:0000255" key="1">
    <source>
        <dbReference type="HAMAP-Rule" id="MF_00012"/>
    </source>
</evidence>
<gene>
    <name evidence="1" type="primary">ilvD</name>
    <name type="ordered locus">Pfl01_5358</name>
</gene>
<protein>
    <recommendedName>
        <fullName evidence="1">Dihydroxy-acid dehydratase</fullName>
        <shortName evidence="1">DAD</shortName>
        <ecNumber evidence="1">4.2.1.9</ecNumber>
    </recommendedName>
</protein>
<comment type="function">
    <text evidence="1">Functions in the biosynthesis of branched-chain amino acids. Catalyzes the dehydration of (2R,3R)-2,3-dihydroxy-3-methylpentanoate (2,3-dihydroxy-3-methylvalerate) into 2-oxo-3-methylpentanoate (2-oxo-3-methylvalerate) and of (2R)-2,3-dihydroxy-3-methylbutanoate (2,3-dihydroxyisovalerate) into 2-oxo-3-methylbutanoate (2-oxoisovalerate), the penultimate precursor to L-isoleucine and L-valine, respectively.</text>
</comment>
<comment type="catalytic activity">
    <reaction evidence="1">
        <text>(2R)-2,3-dihydroxy-3-methylbutanoate = 3-methyl-2-oxobutanoate + H2O</text>
        <dbReference type="Rhea" id="RHEA:24809"/>
        <dbReference type="ChEBI" id="CHEBI:11851"/>
        <dbReference type="ChEBI" id="CHEBI:15377"/>
        <dbReference type="ChEBI" id="CHEBI:49072"/>
        <dbReference type="EC" id="4.2.1.9"/>
    </reaction>
    <physiologicalReaction direction="left-to-right" evidence="1">
        <dbReference type="Rhea" id="RHEA:24810"/>
    </physiologicalReaction>
</comment>
<comment type="catalytic activity">
    <reaction evidence="1">
        <text>(2R,3R)-2,3-dihydroxy-3-methylpentanoate = (S)-3-methyl-2-oxopentanoate + H2O</text>
        <dbReference type="Rhea" id="RHEA:27694"/>
        <dbReference type="ChEBI" id="CHEBI:15377"/>
        <dbReference type="ChEBI" id="CHEBI:35146"/>
        <dbReference type="ChEBI" id="CHEBI:49258"/>
        <dbReference type="EC" id="4.2.1.9"/>
    </reaction>
    <physiologicalReaction direction="left-to-right" evidence="1">
        <dbReference type="Rhea" id="RHEA:27695"/>
    </physiologicalReaction>
</comment>
<comment type="cofactor">
    <cofactor evidence="1">
        <name>[2Fe-2S] cluster</name>
        <dbReference type="ChEBI" id="CHEBI:190135"/>
    </cofactor>
    <text evidence="1">Binds 1 [2Fe-2S] cluster per subunit. This cluster acts as a Lewis acid cofactor.</text>
</comment>
<comment type="cofactor">
    <cofactor evidence="1">
        <name>Mg(2+)</name>
        <dbReference type="ChEBI" id="CHEBI:18420"/>
    </cofactor>
</comment>
<comment type="pathway">
    <text evidence="1">Amino-acid biosynthesis; L-isoleucine biosynthesis; L-isoleucine from 2-oxobutanoate: step 3/4.</text>
</comment>
<comment type="pathway">
    <text evidence="1">Amino-acid biosynthesis; L-valine biosynthesis; L-valine from pyruvate: step 3/4.</text>
</comment>
<comment type="subunit">
    <text evidence="1">Homodimer.</text>
</comment>
<comment type="similarity">
    <text evidence="1">Belongs to the IlvD/Edd family.</text>
</comment>
<feature type="chain" id="PRO_0000225411" description="Dihydroxy-acid dehydratase">
    <location>
        <begin position="1"/>
        <end position="613"/>
    </location>
</feature>
<feature type="active site" description="Proton acceptor" evidence="1">
    <location>
        <position position="515"/>
    </location>
</feature>
<feature type="binding site" evidence="1">
    <location>
        <position position="81"/>
    </location>
    <ligand>
        <name>Mg(2+)</name>
        <dbReference type="ChEBI" id="CHEBI:18420"/>
    </ligand>
</feature>
<feature type="binding site" evidence="1">
    <location>
        <position position="122"/>
    </location>
    <ligand>
        <name>[2Fe-2S] cluster</name>
        <dbReference type="ChEBI" id="CHEBI:190135"/>
    </ligand>
</feature>
<feature type="binding site" evidence="1">
    <location>
        <position position="123"/>
    </location>
    <ligand>
        <name>Mg(2+)</name>
        <dbReference type="ChEBI" id="CHEBI:18420"/>
    </ligand>
</feature>
<feature type="binding site" description="via carbamate group" evidence="1">
    <location>
        <position position="124"/>
    </location>
    <ligand>
        <name>Mg(2+)</name>
        <dbReference type="ChEBI" id="CHEBI:18420"/>
    </ligand>
</feature>
<feature type="binding site" evidence="1">
    <location>
        <position position="193"/>
    </location>
    <ligand>
        <name>[2Fe-2S] cluster</name>
        <dbReference type="ChEBI" id="CHEBI:190135"/>
    </ligand>
</feature>
<feature type="binding site" evidence="1">
    <location>
        <position position="489"/>
    </location>
    <ligand>
        <name>Mg(2+)</name>
        <dbReference type="ChEBI" id="CHEBI:18420"/>
    </ligand>
</feature>
<feature type="modified residue" description="N6-carboxylysine" evidence="1">
    <location>
        <position position="124"/>
    </location>
</feature>
<dbReference type="EC" id="4.2.1.9" evidence="1"/>
<dbReference type="EMBL" id="CP000094">
    <property type="protein sequence ID" value="ABA77095.1"/>
    <property type="molecule type" value="Genomic_DNA"/>
</dbReference>
<dbReference type="RefSeq" id="WP_011336405.1">
    <property type="nucleotide sequence ID" value="NC_007492.2"/>
</dbReference>
<dbReference type="SMR" id="Q3K559"/>
<dbReference type="KEGG" id="pfo:Pfl01_5358"/>
<dbReference type="eggNOG" id="COG0129">
    <property type="taxonomic scope" value="Bacteria"/>
</dbReference>
<dbReference type="HOGENOM" id="CLU_014271_4_2_6"/>
<dbReference type="UniPathway" id="UPA00047">
    <property type="reaction ID" value="UER00057"/>
</dbReference>
<dbReference type="UniPathway" id="UPA00049">
    <property type="reaction ID" value="UER00061"/>
</dbReference>
<dbReference type="Proteomes" id="UP000002704">
    <property type="component" value="Chromosome"/>
</dbReference>
<dbReference type="GO" id="GO:0005829">
    <property type="term" value="C:cytosol"/>
    <property type="evidence" value="ECO:0007669"/>
    <property type="project" value="TreeGrafter"/>
</dbReference>
<dbReference type="GO" id="GO:0051537">
    <property type="term" value="F:2 iron, 2 sulfur cluster binding"/>
    <property type="evidence" value="ECO:0007669"/>
    <property type="project" value="UniProtKB-UniRule"/>
</dbReference>
<dbReference type="GO" id="GO:0004160">
    <property type="term" value="F:dihydroxy-acid dehydratase activity"/>
    <property type="evidence" value="ECO:0007669"/>
    <property type="project" value="UniProtKB-UniRule"/>
</dbReference>
<dbReference type="GO" id="GO:0000287">
    <property type="term" value="F:magnesium ion binding"/>
    <property type="evidence" value="ECO:0007669"/>
    <property type="project" value="UniProtKB-UniRule"/>
</dbReference>
<dbReference type="GO" id="GO:0009097">
    <property type="term" value="P:isoleucine biosynthetic process"/>
    <property type="evidence" value="ECO:0007669"/>
    <property type="project" value="UniProtKB-UniRule"/>
</dbReference>
<dbReference type="GO" id="GO:0009099">
    <property type="term" value="P:L-valine biosynthetic process"/>
    <property type="evidence" value="ECO:0007669"/>
    <property type="project" value="UniProtKB-UniRule"/>
</dbReference>
<dbReference type="FunFam" id="3.50.30.80:FF:000001">
    <property type="entry name" value="Dihydroxy-acid dehydratase"/>
    <property type="match status" value="1"/>
</dbReference>
<dbReference type="Gene3D" id="3.50.30.80">
    <property type="entry name" value="IlvD/EDD C-terminal domain-like"/>
    <property type="match status" value="1"/>
</dbReference>
<dbReference type="HAMAP" id="MF_00012">
    <property type="entry name" value="IlvD"/>
    <property type="match status" value="1"/>
</dbReference>
<dbReference type="InterPro" id="IPR042096">
    <property type="entry name" value="Dihydro-acid_dehy_C"/>
</dbReference>
<dbReference type="InterPro" id="IPR004404">
    <property type="entry name" value="DihydroxyA_deHydtase"/>
</dbReference>
<dbReference type="InterPro" id="IPR020558">
    <property type="entry name" value="DiOHA_6PGluconate_deHydtase_CS"/>
</dbReference>
<dbReference type="InterPro" id="IPR056740">
    <property type="entry name" value="ILV_EDD_C"/>
</dbReference>
<dbReference type="InterPro" id="IPR000581">
    <property type="entry name" value="ILV_EDD_N"/>
</dbReference>
<dbReference type="InterPro" id="IPR037237">
    <property type="entry name" value="IlvD/EDD_N"/>
</dbReference>
<dbReference type="NCBIfam" id="TIGR00110">
    <property type="entry name" value="ilvD"/>
    <property type="match status" value="1"/>
</dbReference>
<dbReference type="NCBIfam" id="NF009103">
    <property type="entry name" value="PRK12448.1"/>
    <property type="match status" value="1"/>
</dbReference>
<dbReference type="PANTHER" id="PTHR43661">
    <property type="entry name" value="D-XYLONATE DEHYDRATASE"/>
    <property type="match status" value="1"/>
</dbReference>
<dbReference type="PANTHER" id="PTHR43661:SF3">
    <property type="entry name" value="D-XYLONATE DEHYDRATASE YAGF-RELATED"/>
    <property type="match status" value="1"/>
</dbReference>
<dbReference type="Pfam" id="PF24877">
    <property type="entry name" value="ILV_EDD_C"/>
    <property type="match status" value="1"/>
</dbReference>
<dbReference type="Pfam" id="PF00920">
    <property type="entry name" value="ILVD_EDD_N"/>
    <property type="match status" value="1"/>
</dbReference>
<dbReference type="SUPFAM" id="SSF143975">
    <property type="entry name" value="IlvD/EDD N-terminal domain-like"/>
    <property type="match status" value="1"/>
</dbReference>
<dbReference type="SUPFAM" id="SSF52016">
    <property type="entry name" value="LeuD/IlvD-like"/>
    <property type="match status" value="1"/>
</dbReference>
<dbReference type="PROSITE" id="PS00886">
    <property type="entry name" value="ILVD_EDD_1"/>
    <property type="match status" value="1"/>
</dbReference>
<dbReference type="PROSITE" id="PS00887">
    <property type="entry name" value="ILVD_EDD_2"/>
    <property type="match status" value="1"/>
</dbReference>
<keyword id="KW-0001">2Fe-2S</keyword>
<keyword id="KW-0028">Amino-acid biosynthesis</keyword>
<keyword id="KW-0100">Branched-chain amino acid biosynthesis</keyword>
<keyword id="KW-0408">Iron</keyword>
<keyword id="KW-0411">Iron-sulfur</keyword>
<keyword id="KW-0456">Lyase</keyword>
<keyword id="KW-0460">Magnesium</keyword>
<keyword id="KW-0479">Metal-binding</keyword>
<reference key="1">
    <citation type="journal article" date="2009" name="Genome Biol.">
        <title>Genomic and genetic analyses of diversity and plant interactions of Pseudomonas fluorescens.</title>
        <authorList>
            <person name="Silby M.W."/>
            <person name="Cerdeno-Tarraga A.M."/>
            <person name="Vernikos G.S."/>
            <person name="Giddens S.R."/>
            <person name="Jackson R.W."/>
            <person name="Preston G.M."/>
            <person name="Zhang X.-X."/>
            <person name="Moon C.D."/>
            <person name="Gehrig S.M."/>
            <person name="Godfrey S.A.C."/>
            <person name="Knight C.G."/>
            <person name="Malone J.G."/>
            <person name="Robinson Z."/>
            <person name="Spiers A.J."/>
            <person name="Harris S."/>
            <person name="Challis G.L."/>
            <person name="Yaxley A.M."/>
            <person name="Harris D."/>
            <person name="Seeger K."/>
            <person name="Murphy L."/>
            <person name="Rutter S."/>
            <person name="Squares R."/>
            <person name="Quail M.A."/>
            <person name="Saunders E."/>
            <person name="Mavromatis K."/>
            <person name="Brettin T.S."/>
            <person name="Bentley S.D."/>
            <person name="Hothersall J."/>
            <person name="Stephens E."/>
            <person name="Thomas C.M."/>
            <person name="Parkhill J."/>
            <person name="Levy S.B."/>
            <person name="Rainey P.B."/>
            <person name="Thomson N.R."/>
        </authorList>
    </citation>
    <scope>NUCLEOTIDE SEQUENCE [LARGE SCALE GENOMIC DNA]</scope>
    <source>
        <strain>Pf0-1</strain>
    </source>
</reference>
<accession>Q3K559</accession>
<name>ILVD_PSEPF</name>
<sequence length="613" mass="65874">MPDYRSKTSTHGRNMAGARALWRATGMKDDDFKKPIIAIANSFTQFVPGHVHLKDLGQLVAREIERAGGVAKEFNTIAVDDGIAMGHDGMLYSLPSREIIADSVEYMVNAHCADAIVCISNCDKITPGMLMAALRLNIPVIFVSGGPMEAGKTKLASHGLDLVDAMVIAADSSASDEKVAEYERSACPTCGSCSGMFTANSMNCLTEALGLALPGNGSTLATHSDREQLFLQAGRTIVELCKRYYGENDESVLPRNIANFKAFENAMMLDIAMGGSTNTILHLLAAAQEAEIDFDLRDIDRLSRKVPQLCKVAPNIQKYHMEDVHRAGGIFSILGSLARGGLLHTDLPTVHSRSMEEAIAKWDITQTDDEAVHHFFKAGPAGIPTQTAFSQSTRWETLDDDRENGCIRSFEHAYSKEGGLAVLYGNIALDGCVVKTAGVDESIHVFEGNAKIFESQDSAVRGILADEVKEGDIVIIRYEGPKGGPGMQEMLYPTSYLKSKGLGKACALLTDGRFSGGTSGLSIGHASPEAAAGGAIGLVQDGDKVLIDIPNRSINLLISDEELAARRVEQDKKGWKPVEQRPRKVTTALKAYALLATSADKGAVRNKAMLDGL</sequence>
<proteinExistence type="inferred from homology"/>
<organism>
    <name type="scientific">Pseudomonas fluorescens (strain Pf0-1)</name>
    <dbReference type="NCBI Taxonomy" id="205922"/>
    <lineage>
        <taxon>Bacteria</taxon>
        <taxon>Pseudomonadati</taxon>
        <taxon>Pseudomonadota</taxon>
        <taxon>Gammaproteobacteria</taxon>
        <taxon>Pseudomonadales</taxon>
        <taxon>Pseudomonadaceae</taxon>
        <taxon>Pseudomonas</taxon>
    </lineage>
</organism>